<feature type="chain" id="PRO_0000272736" description="Large ribosomal subunit protein uL23">
    <location>
        <begin position="1"/>
        <end position="101"/>
    </location>
</feature>
<name>RL23_COREF</name>
<gene>
    <name evidence="1" type="primary">rplW</name>
    <name type="ordered locus">CE0524</name>
</gene>
<keyword id="KW-1185">Reference proteome</keyword>
<keyword id="KW-0687">Ribonucleoprotein</keyword>
<keyword id="KW-0689">Ribosomal protein</keyword>
<keyword id="KW-0694">RNA-binding</keyword>
<keyword id="KW-0699">rRNA-binding</keyword>
<evidence type="ECO:0000255" key="1">
    <source>
        <dbReference type="HAMAP-Rule" id="MF_01369"/>
    </source>
</evidence>
<evidence type="ECO:0000305" key="2"/>
<organism>
    <name type="scientific">Corynebacterium efficiens (strain DSM 44549 / YS-314 / AJ 12310 / JCM 11189 / NBRC 100395)</name>
    <dbReference type="NCBI Taxonomy" id="196164"/>
    <lineage>
        <taxon>Bacteria</taxon>
        <taxon>Bacillati</taxon>
        <taxon>Actinomycetota</taxon>
        <taxon>Actinomycetes</taxon>
        <taxon>Mycobacteriales</taxon>
        <taxon>Corynebacteriaceae</taxon>
        <taxon>Corynebacterium</taxon>
    </lineage>
</organism>
<proteinExistence type="inferred from homology"/>
<sequence length="101" mass="11155">MATIANPRDIILAPVVSEKSYGLMEQNVYTFFVARDANKTQIKIAVEEIFGVKVASVNTVNREGKRKRSRSGFGVRKATKRAYVTLREGSDSIDIFNGSVA</sequence>
<protein>
    <recommendedName>
        <fullName evidence="1">Large ribosomal subunit protein uL23</fullName>
    </recommendedName>
    <alternativeName>
        <fullName evidence="2">50S ribosomal protein L23</fullName>
    </alternativeName>
</protein>
<accession>Q8FS78</accession>
<comment type="function">
    <text evidence="1">One of the early assembly proteins it binds 23S rRNA. One of the proteins that surrounds the polypeptide exit tunnel on the outside of the ribosome. Forms the main docking site for trigger factor binding to the ribosome.</text>
</comment>
<comment type="subunit">
    <text evidence="1">Part of the 50S ribosomal subunit. Contacts protein L29, and trigger factor when it is bound to the ribosome.</text>
</comment>
<comment type="similarity">
    <text evidence="1">Belongs to the universal ribosomal protein uL23 family.</text>
</comment>
<reference key="1">
    <citation type="journal article" date="2003" name="Genome Res.">
        <title>Comparative complete genome sequence analysis of the amino acid replacements responsible for the thermostability of Corynebacterium efficiens.</title>
        <authorList>
            <person name="Nishio Y."/>
            <person name="Nakamura Y."/>
            <person name="Kawarabayasi Y."/>
            <person name="Usuda Y."/>
            <person name="Kimura E."/>
            <person name="Sugimoto S."/>
            <person name="Matsui K."/>
            <person name="Yamagishi A."/>
            <person name="Kikuchi H."/>
            <person name="Ikeo K."/>
            <person name="Gojobori T."/>
        </authorList>
    </citation>
    <scope>NUCLEOTIDE SEQUENCE [LARGE SCALE GENOMIC DNA]</scope>
    <source>
        <strain>DSM 44549 / YS-314 / AJ 12310 / JCM 11189 / NBRC 100395</strain>
    </source>
</reference>
<dbReference type="EMBL" id="BA000035">
    <property type="protein sequence ID" value="BAC17334.1"/>
    <property type="molecule type" value="Genomic_DNA"/>
</dbReference>
<dbReference type="RefSeq" id="WP_006769802.1">
    <property type="nucleotide sequence ID" value="NC_004369.1"/>
</dbReference>
<dbReference type="SMR" id="Q8FS78"/>
<dbReference type="STRING" id="196164.gene:10740926"/>
<dbReference type="KEGG" id="cef:CE0524"/>
<dbReference type="eggNOG" id="COG0089">
    <property type="taxonomic scope" value="Bacteria"/>
</dbReference>
<dbReference type="HOGENOM" id="CLU_037562_3_2_11"/>
<dbReference type="OrthoDB" id="9793353at2"/>
<dbReference type="Proteomes" id="UP000001409">
    <property type="component" value="Chromosome"/>
</dbReference>
<dbReference type="GO" id="GO:1990904">
    <property type="term" value="C:ribonucleoprotein complex"/>
    <property type="evidence" value="ECO:0007669"/>
    <property type="project" value="UniProtKB-KW"/>
</dbReference>
<dbReference type="GO" id="GO:0005840">
    <property type="term" value="C:ribosome"/>
    <property type="evidence" value="ECO:0007669"/>
    <property type="project" value="UniProtKB-KW"/>
</dbReference>
<dbReference type="GO" id="GO:0019843">
    <property type="term" value="F:rRNA binding"/>
    <property type="evidence" value="ECO:0007669"/>
    <property type="project" value="UniProtKB-UniRule"/>
</dbReference>
<dbReference type="GO" id="GO:0003735">
    <property type="term" value="F:structural constituent of ribosome"/>
    <property type="evidence" value="ECO:0007669"/>
    <property type="project" value="InterPro"/>
</dbReference>
<dbReference type="GO" id="GO:0006412">
    <property type="term" value="P:translation"/>
    <property type="evidence" value="ECO:0007669"/>
    <property type="project" value="UniProtKB-UniRule"/>
</dbReference>
<dbReference type="FunFam" id="3.30.70.330:FF:000001">
    <property type="entry name" value="50S ribosomal protein L23"/>
    <property type="match status" value="1"/>
</dbReference>
<dbReference type="Gene3D" id="3.30.70.330">
    <property type="match status" value="1"/>
</dbReference>
<dbReference type="HAMAP" id="MF_01369_B">
    <property type="entry name" value="Ribosomal_uL23_B"/>
    <property type="match status" value="1"/>
</dbReference>
<dbReference type="InterPro" id="IPR012677">
    <property type="entry name" value="Nucleotide-bd_a/b_plait_sf"/>
</dbReference>
<dbReference type="InterPro" id="IPR013025">
    <property type="entry name" value="Ribosomal_uL23-like"/>
</dbReference>
<dbReference type="InterPro" id="IPR012678">
    <property type="entry name" value="Ribosomal_uL23/eL15/eS24_sf"/>
</dbReference>
<dbReference type="NCBIfam" id="NF004359">
    <property type="entry name" value="PRK05738.1-3"/>
    <property type="match status" value="1"/>
</dbReference>
<dbReference type="NCBIfam" id="NF004363">
    <property type="entry name" value="PRK05738.2-4"/>
    <property type="match status" value="1"/>
</dbReference>
<dbReference type="NCBIfam" id="NF004364">
    <property type="entry name" value="PRK05738.2-5"/>
    <property type="match status" value="1"/>
</dbReference>
<dbReference type="PANTHER" id="PTHR11620">
    <property type="entry name" value="60S RIBOSOMAL PROTEIN L23A"/>
    <property type="match status" value="1"/>
</dbReference>
<dbReference type="Pfam" id="PF00276">
    <property type="entry name" value="Ribosomal_L23"/>
    <property type="match status" value="1"/>
</dbReference>
<dbReference type="SUPFAM" id="SSF54189">
    <property type="entry name" value="Ribosomal proteins S24e, L23 and L15e"/>
    <property type="match status" value="1"/>
</dbReference>